<dbReference type="EMBL" id="AK096935">
    <property type="protein sequence ID" value="BAC04904.1"/>
    <property type="molecule type" value="mRNA"/>
</dbReference>
<dbReference type="EMBL" id="AC003029">
    <property type="status" value="NOT_ANNOTATED_CDS"/>
    <property type="molecule type" value="Genomic_DNA"/>
</dbReference>
<dbReference type="iPTMnet" id="Q8N8E1"/>
<dbReference type="PhosphoSitePlus" id="Q8N8E1"/>
<dbReference type="BioMuta" id="HGNC:24091"/>
<dbReference type="jPOST" id="Q8N8E1"/>
<dbReference type="MassIVE" id="Q8N8E1"/>
<dbReference type="AGR" id="HGNC:24091"/>
<dbReference type="GeneCards" id="MAPKAPK5-AS1"/>
<dbReference type="HGNC" id="HGNC:24091">
    <property type="gene designation" value="MAPKAPK5-AS1"/>
</dbReference>
<dbReference type="neXtProt" id="NX_Q8N8E1"/>
<dbReference type="InParanoid" id="Q8N8E1"/>
<dbReference type="PAN-GO" id="Q8N8E1">
    <property type="GO annotations" value="0 GO annotations based on evolutionary models"/>
</dbReference>
<dbReference type="PathwayCommons" id="Q8N8E1"/>
<dbReference type="ChiTaRS" id="MAPKAPK5-AS1">
    <property type="organism name" value="human"/>
</dbReference>
<dbReference type="Pharos" id="Q8N8E1">
    <property type="development level" value="Tdark"/>
</dbReference>
<dbReference type="Proteomes" id="UP000005640">
    <property type="component" value="Unplaced"/>
</dbReference>
<dbReference type="RNAct" id="Q8N8E1">
    <property type="molecule type" value="protein"/>
</dbReference>
<protein>
    <recommendedName>
        <fullName>Putative uncharacterized protein encoded by MAPKAPK5-AS1</fullName>
    </recommendedName>
    <alternativeName>
        <fullName>MAPKAPK5 antisense RNA 1</fullName>
    </alternativeName>
    <alternativeName>
        <fullName>MAPKAPK5 antisense gene protein 1</fullName>
    </alternativeName>
</protein>
<gene>
    <name type="primary">MAPKAPK5-AS1</name>
    <name type="synonym">C12orf47</name>
</gene>
<feature type="chain" id="PRO_0000337132" description="Putative uncharacterized protein encoded by MAPKAPK5-AS1">
    <location>
        <begin position="1"/>
        <end position="139"/>
    </location>
</feature>
<feature type="region of interest" description="Disordered" evidence="1">
    <location>
        <begin position="1"/>
        <end position="80"/>
    </location>
</feature>
<feature type="region of interest" description="Disordered" evidence="1">
    <location>
        <begin position="100"/>
        <end position="139"/>
    </location>
</feature>
<feature type="compositionally biased region" description="Polar residues" evidence="1">
    <location>
        <begin position="1"/>
        <end position="11"/>
    </location>
</feature>
<feature type="compositionally biased region" description="Low complexity" evidence="1">
    <location>
        <begin position="63"/>
        <end position="80"/>
    </location>
</feature>
<name>MAAS1_HUMAN</name>
<accession>Q8N8E1</accession>
<keyword id="KW-1185">Reference proteome</keyword>
<organism>
    <name type="scientific">Homo sapiens</name>
    <name type="common">Human</name>
    <dbReference type="NCBI Taxonomy" id="9606"/>
    <lineage>
        <taxon>Eukaryota</taxon>
        <taxon>Metazoa</taxon>
        <taxon>Chordata</taxon>
        <taxon>Craniata</taxon>
        <taxon>Vertebrata</taxon>
        <taxon>Euteleostomi</taxon>
        <taxon>Mammalia</taxon>
        <taxon>Eutheria</taxon>
        <taxon>Euarchontoglires</taxon>
        <taxon>Primates</taxon>
        <taxon>Haplorrhini</taxon>
        <taxon>Catarrhini</taxon>
        <taxon>Hominidae</taxon>
        <taxon>Homo</taxon>
    </lineage>
</organism>
<proteinExistence type="uncertain"/>
<reference key="1">
    <citation type="journal article" date="2004" name="Nat. Genet.">
        <title>Complete sequencing and characterization of 21,243 full-length human cDNAs.</title>
        <authorList>
            <person name="Ota T."/>
            <person name="Suzuki Y."/>
            <person name="Nishikawa T."/>
            <person name="Otsuki T."/>
            <person name="Sugiyama T."/>
            <person name="Irie R."/>
            <person name="Wakamatsu A."/>
            <person name="Hayashi K."/>
            <person name="Sato H."/>
            <person name="Nagai K."/>
            <person name="Kimura K."/>
            <person name="Makita H."/>
            <person name="Sekine M."/>
            <person name="Obayashi M."/>
            <person name="Nishi T."/>
            <person name="Shibahara T."/>
            <person name="Tanaka T."/>
            <person name="Ishii S."/>
            <person name="Yamamoto J."/>
            <person name="Saito K."/>
            <person name="Kawai Y."/>
            <person name="Isono Y."/>
            <person name="Nakamura Y."/>
            <person name="Nagahari K."/>
            <person name="Murakami K."/>
            <person name="Yasuda T."/>
            <person name="Iwayanagi T."/>
            <person name="Wagatsuma M."/>
            <person name="Shiratori A."/>
            <person name="Sudo H."/>
            <person name="Hosoiri T."/>
            <person name="Kaku Y."/>
            <person name="Kodaira H."/>
            <person name="Kondo H."/>
            <person name="Sugawara M."/>
            <person name="Takahashi M."/>
            <person name="Kanda K."/>
            <person name="Yokoi T."/>
            <person name="Furuya T."/>
            <person name="Kikkawa E."/>
            <person name="Omura Y."/>
            <person name="Abe K."/>
            <person name="Kamihara K."/>
            <person name="Katsuta N."/>
            <person name="Sato K."/>
            <person name="Tanikawa M."/>
            <person name="Yamazaki M."/>
            <person name="Ninomiya K."/>
            <person name="Ishibashi T."/>
            <person name="Yamashita H."/>
            <person name="Murakawa K."/>
            <person name="Fujimori K."/>
            <person name="Tanai H."/>
            <person name="Kimata M."/>
            <person name="Watanabe M."/>
            <person name="Hiraoka S."/>
            <person name="Chiba Y."/>
            <person name="Ishida S."/>
            <person name="Ono Y."/>
            <person name="Takiguchi S."/>
            <person name="Watanabe S."/>
            <person name="Yosida M."/>
            <person name="Hotuta T."/>
            <person name="Kusano J."/>
            <person name="Kanehori K."/>
            <person name="Takahashi-Fujii A."/>
            <person name="Hara H."/>
            <person name="Tanase T.-O."/>
            <person name="Nomura Y."/>
            <person name="Togiya S."/>
            <person name="Komai F."/>
            <person name="Hara R."/>
            <person name="Takeuchi K."/>
            <person name="Arita M."/>
            <person name="Imose N."/>
            <person name="Musashino K."/>
            <person name="Yuuki H."/>
            <person name="Oshima A."/>
            <person name="Sasaki N."/>
            <person name="Aotsuka S."/>
            <person name="Yoshikawa Y."/>
            <person name="Matsunawa H."/>
            <person name="Ichihara T."/>
            <person name="Shiohata N."/>
            <person name="Sano S."/>
            <person name="Moriya S."/>
            <person name="Momiyama H."/>
            <person name="Satoh N."/>
            <person name="Takami S."/>
            <person name="Terashima Y."/>
            <person name="Suzuki O."/>
            <person name="Nakagawa S."/>
            <person name="Senoh A."/>
            <person name="Mizoguchi H."/>
            <person name="Goto Y."/>
            <person name="Shimizu F."/>
            <person name="Wakebe H."/>
            <person name="Hishigaki H."/>
            <person name="Watanabe T."/>
            <person name="Sugiyama A."/>
            <person name="Takemoto M."/>
            <person name="Kawakami B."/>
            <person name="Yamazaki M."/>
            <person name="Watanabe K."/>
            <person name="Kumagai A."/>
            <person name="Itakura S."/>
            <person name="Fukuzumi Y."/>
            <person name="Fujimori Y."/>
            <person name="Komiyama M."/>
            <person name="Tashiro H."/>
            <person name="Tanigami A."/>
            <person name="Fujiwara T."/>
            <person name="Ono T."/>
            <person name="Yamada K."/>
            <person name="Fujii Y."/>
            <person name="Ozaki K."/>
            <person name="Hirao M."/>
            <person name="Ohmori Y."/>
            <person name="Kawabata A."/>
            <person name="Hikiji T."/>
            <person name="Kobatake N."/>
            <person name="Inagaki H."/>
            <person name="Ikema Y."/>
            <person name="Okamoto S."/>
            <person name="Okitani R."/>
            <person name="Kawakami T."/>
            <person name="Noguchi S."/>
            <person name="Itoh T."/>
            <person name="Shigeta K."/>
            <person name="Senba T."/>
            <person name="Matsumura K."/>
            <person name="Nakajima Y."/>
            <person name="Mizuno T."/>
            <person name="Morinaga M."/>
            <person name="Sasaki M."/>
            <person name="Togashi T."/>
            <person name="Oyama M."/>
            <person name="Hata H."/>
            <person name="Watanabe M."/>
            <person name="Komatsu T."/>
            <person name="Mizushima-Sugano J."/>
            <person name="Satoh T."/>
            <person name="Shirai Y."/>
            <person name="Takahashi Y."/>
            <person name="Nakagawa K."/>
            <person name="Okumura K."/>
            <person name="Nagase T."/>
            <person name="Nomura N."/>
            <person name="Kikuchi H."/>
            <person name="Masuho Y."/>
            <person name="Yamashita R."/>
            <person name="Nakai K."/>
            <person name="Yada T."/>
            <person name="Nakamura Y."/>
            <person name="Ohara O."/>
            <person name="Isogai T."/>
            <person name="Sugano S."/>
        </authorList>
    </citation>
    <scope>NUCLEOTIDE SEQUENCE [LARGE SCALE MRNA]</scope>
    <source>
        <tissue>Small intestine</tissue>
    </source>
</reference>
<reference key="2">
    <citation type="journal article" date="2006" name="Nature">
        <title>The finished DNA sequence of human chromosome 12.</title>
        <authorList>
            <person name="Scherer S.E."/>
            <person name="Muzny D.M."/>
            <person name="Buhay C.J."/>
            <person name="Chen R."/>
            <person name="Cree A."/>
            <person name="Ding Y."/>
            <person name="Dugan-Rocha S."/>
            <person name="Gill R."/>
            <person name="Gunaratne P."/>
            <person name="Harris R.A."/>
            <person name="Hawes A.C."/>
            <person name="Hernandez J."/>
            <person name="Hodgson A.V."/>
            <person name="Hume J."/>
            <person name="Jackson A."/>
            <person name="Khan Z.M."/>
            <person name="Kovar-Smith C."/>
            <person name="Lewis L.R."/>
            <person name="Lozado R.J."/>
            <person name="Metzker M.L."/>
            <person name="Milosavljevic A."/>
            <person name="Miner G.R."/>
            <person name="Montgomery K.T."/>
            <person name="Morgan M.B."/>
            <person name="Nazareth L.V."/>
            <person name="Scott G."/>
            <person name="Sodergren E."/>
            <person name="Song X.-Z."/>
            <person name="Steffen D."/>
            <person name="Lovering R.C."/>
            <person name="Wheeler D.A."/>
            <person name="Worley K.C."/>
            <person name="Yuan Y."/>
            <person name="Zhang Z."/>
            <person name="Adams C.Q."/>
            <person name="Ansari-Lari M.A."/>
            <person name="Ayele M."/>
            <person name="Brown M.J."/>
            <person name="Chen G."/>
            <person name="Chen Z."/>
            <person name="Clerc-Blankenburg K.P."/>
            <person name="Davis C."/>
            <person name="Delgado O."/>
            <person name="Dinh H.H."/>
            <person name="Draper H."/>
            <person name="Gonzalez-Garay M.L."/>
            <person name="Havlak P."/>
            <person name="Jackson L.R."/>
            <person name="Jacob L.S."/>
            <person name="Kelly S.H."/>
            <person name="Li L."/>
            <person name="Li Z."/>
            <person name="Liu J."/>
            <person name="Liu W."/>
            <person name="Lu J."/>
            <person name="Maheshwari M."/>
            <person name="Nguyen B.-V."/>
            <person name="Okwuonu G.O."/>
            <person name="Pasternak S."/>
            <person name="Perez L.M."/>
            <person name="Plopper F.J.H."/>
            <person name="Santibanez J."/>
            <person name="Shen H."/>
            <person name="Tabor P.E."/>
            <person name="Verduzco D."/>
            <person name="Waldron L."/>
            <person name="Wang Q."/>
            <person name="Williams G.A."/>
            <person name="Zhang J."/>
            <person name="Zhou J."/>
            <person name="Allen C.C."/>
            <person name="Amin A.G."/>
            <person name="Anyalebechi V."/>
            <person name="Bailey M."/>
            <person name="Barbaria J.A."/>
            <person name="Bimage K.E."/>
            <person name="Bryant N.P."/>
            <person name="Burch P.E."/>
            <person name="Burkett C.E."/>
            <person name="Burrell K.L."/>
            <person name="Calderon E."/>
            <person name="Cardenas V."/>
            <person name="Carter K."/>
            <person name="Casias K."/>
            <person name="Cavazos I."/>
            <person name="Cavazos S.R."/>
            <person name="Ceasar H."/>
            <person name="Chacko J."/>
            <person name="Chan S.N."/>
            <person name="Chavez D."/>
            <person name="Christopoulos C."/>
            <person name="Chu J."/>
            <person name="Cockrell R."/>
            <person name="Cox C.D."/>
            <person name="Dang M."/>
            <person name="Dathorne S.R."/>
            <person name="David R."/>
            <person name="Davis C.M."/>
            <person name="Davy-Carroll L."/>
            <person name="Deshazo D.R."/>
            <person name="Donlin J.E."/>
            <person name="D'Souza L."/>
            <person name="Eaves K.A."/>
            <person name="Egan A."/>
            <person name="Emery-Cohen A.J."/>
            <person name="Escotto M."/>
            <person name="Flagg N."/>
            <person name="Forbes L.D."/>
            <person name="Gabisi A.M."/>
            <person name="Garza M."/>
            <person name="Hamilton C."/>
            <person name="Henderson N."/>
            <person name="Hernandez O."/>
            <person name="Hines S."/>
            <person name="Hogues M.E."/>
            <person name="Huang M."/>
            <person name="Idlebird D.G."/>
            <person name="Johnson R."/>
            <person name="Jolivet A."/>
            <person name="Jones S."/>
            <person name="Kagan R."/>
            <person name="King L.M."/>
            <person name="Leal B."/>
            <person name="Lebow H."/>
            <person name="Lee S."/>
            <person name="LeVan J.M."/>
            <person name="Lewis L.C."/>
            <person name="London P."/>
            <person name="Lorensuhewa L.M."/>
            <person name="Loulseged H."/>
            <person name="Lovett D.A."/>
            <person name="Lucier A."/>
            <person name="Lucier R.L."/>
            <person name="Ma J."/>
            <person name="Madu R.C."/>
            <person name="Mapua P."/>
            <person name="Martindale A.D."/>
            <person name="Martinez E."/>
            <person name="Massey E."/>
            <person name="Mawhiney S."/>
            <person name="Meador M.G."/>
            <person name="Mendez S."/>
            <person name="Mercado C."/>
            <person name="Mercado I.C."/>
            <person name="Merritt C.E."/>
            <person name="Miner Z.L."/>
            <person name="Minja E."/>
            <person name="Mitchell T."/>
            <person name="Mohabbat F."/>
            <person name="Mohabbat K."/>
            <person name="Montgomery B."/>
            <person name="Moore N."/>
            <person name="Morris S."/>
            <person name="Munidasa M."/>
            <person name="Ngo R.N."/>
            <person name="Nguyen N.B."/>
            <person name="Nickerson E."/>
            <person name="Nwaokelemeh O.O."/>
            <person name="Nwokenkwo S."/>
            <person name="Obregon M."/>
            <person name="Oguh M."/>
            <person name="Oragunye N."/>
            <person name="Oviedo R.J."/>
            <person name="Parish B.J."/>
            <person name="Parker D.N."/>
            <person name="Parrish J."/>
            <person name="Parks K.L."/>
            <person name="Paul H.A."/>
            <person name="Payton B.A."/>
            <person name="Perez A."/>
            <person name="Perrin W."/>
            <person name="Pickens A."/>
            <person name="Primus E.L."/>
            <person name="Pu L.-L."/>
            <person name="Puazo M."/>
            <person name="Quiles M.M."/>
            <person name="Quiroz J.B."/>
            <person name="Rabata D."/>
            <person name="Reeves K."/>
            <person name="Ruiz S.J."/>
            <person name="Shao H."/>
            <person name="Sisson I."/>
            <person name="Sonaike T."/>
            <person name="Sorelle R.P."/>
            <person name="Sutton A.E."/>
            <person name="Svatek A.F."/>
            <person name="Svetz L.A."/>
            <person name="Tamerisa K.S."/>
            <person name="Taylor T.R."/>
            <person name="Teague B."/>
            <person name="Thomas N."/>
            <person name="Thorn R.D."/>
            <person name="Trejos Z.Y."/>
            <person name="Trevino B.K."/>
            <person name="Ukegbu O.N."/>
            <person name="Urban J.B."/>
            <person name="Vasquez L.I."/>
            <person name="Vera V.A."/>
            <person name="Villasana D.M."/>
            <person name="Wang L."/>
            <person name="Ward-Moore S."/>
            <person name="Warren J.T."/>
            <person name="Wei X."/>
            <person name="White F."/>
            <person name="Williamson A.L."/>
            <person name="Wleczyk R."/>
            <person name="Wooden H.S."/>
            <person name="Wooden S.H."/>
            <person name="Yen J."/>
            <person name="Yoon L."/>
            <person name="Yoon V."/>
            <person name="Zorrilla S.E."/>
            <person name="Nelson D."/>
            <person name="Kucherlapati R."/>
            <person name="Weinstock G."/>
            <person name="Gibbs R.A."/>
        </authorList>
    </citation>
    <scope>NUCLEOTIDE SEQUENCE [LARGE SCALE GENOMIC DNA]</scope>
</reference>
<comment type="caution">
    <text evidence="2">Product of a dubious CDS prediction.</text>
</comment>
<sequence length="139" mass="13175">MALSMSLSSDILSGAPTAGRGGGCSAALSPRGRGSKGLGTRAPGPRGDGQQPPLGTGGDEDPGAGSASAGGSRLAAAAAAEAAAPGDRSLCWAPRGRLLASSPAGEAGSWGRARRGGPRPGAPCKGLAGPPLRPGLARS</sequence>
<evidence type="ECO:0000256" key="1">
    <source>
        <dbReference type="SAM" id="MobiDB-lite"/>
    </source>
</evidence>
<evidence type="ECO:0000305" key="2"/>